<dbReference type="EC" id="5.3.1.9" evidence="1"/>
<dbReference type="EMBL" id="AP008231">
    <property type="protein sequence ID" value="BAD80256.1"/>
    <property type="molecule type" value="Genomic_DNA"/>
</dbReference>
<dbReference type="RefSeq" id="WP_011244376.1">
    <property type="nucleotide sequence ID" value="NZ_CP085785.1"/>
</dbReference>
<dbReference type="SMR" id="Q5N0B4"/>
<dbReference type="KEGG" id="syc:syc2066_c"/>
<dbReference type="eggNOG" id="COG0166">
    <property type="taxonomic scope" value="Bacteria"/>
</dbReference>
<dbReference type="UniPathway" id="UPA00109">
    <property type="reaction ID" value="UER00181"/>
</dbReference>
<dbReference type="UniPathway" id="UPA00138"/>
<dbReference type="Proteomes" id="UP000001175">
    <property type="component" value="Chromosome"/>
</dbReference>
<dbReference type="GO" id="GO:0005829">
    <property type="term" value="C:cytosol"/>
    <property type="evidence" value="ECO:0007669"/>
    <property type="project" value="TreeGrafter"/>
</dbReference>
<dbReference type="GO" id="GO:0097367">
    <property type="term" value="F:carbohydrate derivative binding"/>
    <property type="evidence" value="ECO:0007669"/>
    <property type="project" value="InterPro"/>
</dbReference>
<dbReference type="GO" id="GO:0004347">
    <property type="term" value="F:glucose-6-phosphate isomerase activity"/>
    <property type="evidence" value="ECO:0007669"/>
    <property type="project" value="UniProtKB-UniRule"/>
</dbReference>
<dbReference type="GO" id="GO:0048029">
    <property type="term" value="F:monosaccharide binding"/>
    <property type="evidence" value="ECO:0007669"/>
    <property type="project" value="TreeGrafter"/>
</dbReference>
<dbReference type="GO" id="GO:0006094">
    <property type="term" value="P:gluconeogenesis"/>
    <property type="evidence" value="ECO:0007669"/>
    <property type="project" value="UniProtKB-UniRule"/>
</dbReference>
<dbReference type="GO" id="GO:0051156">
    <property type="term" value="P:glucose 6-phosphate metabolic process"/>
    <property type="evidence" value="ECO:0007669"/>
    <property type="project" value="TreeGrafter"/>
</dbReference>
<dbReference type="GO" id="GO:0006096">
    <property type="term" value="P:glycolytic process"/>
    <property type="evidence" value="ECO:0007669"/>
    <property type="project" value="UniProtKB-UniRule"/>
</dbReference>
<dbReference type="CDD" id="cd05015">
    <property type="entry name" value="SIS_PGI_1"/>
    <property type="match status" value="1"/>
</dbReference>
<dbReference type="CDD" id="cd05016">
    <property type="entry name" value="SIS_PGI_2"/>
    <property type="match status" value="1"/>
</dbReference>
<dbReference type="FunFam" id="3.40.50.10490:FF:000021">
    <property type="entry name" value="Glucose-6-phosphate isomerase"/>
    <property type="match status" value="1"/>
</dbReference>
<dbReference type="FunFam" id="3.40.50.10490:FF:000023">
    <property type="entry name" value="Glucose-6-phosphate isomerase"/>
    <property type="match status" value="1"/>
</dbReference>
<dbReference type="Gene3D" id="3.40.50.10490">
    <property type="entry name" value="Glucose-6-phosphate isomerase like protein, domain 1"/>
    <property type="match status" value="3"/>
</dbReference>
<dbReference type="HAMAP" id="MF_00473">
    <property type="entry name" value="G6P_isomerase"/>
    <property type="match status" value="1"/>
</dbReference>
<dbReference type="InterPro" id="IPR001672">
    <property type="entry name" value="G6P_Isomerase"/>
</dbReference>
<dbReference type="InterPro" id="IPR018189">
    <property type="entry name" value="Phosphoglucose_isomerase_CS"/>
</dbReference>
<dbReference type="InterPro" id="IPR046348">
    <property type="entry name" value="SIS_dom_sf"/>
</dbReference>
<dbReference type="InterPro" id="IPR035476">
    <property type="entry name" value="SIS_PGI_1"/>
</dbReference>
<dbReference type="InterPro" id="IPR035482">
    <property type="entry name" value="SIS_PGI_2"/>
</dbReference>
<dbReference type="NCBIfam" id="NF010696">
    <property type="entry name" value="PRK14096.1"/>
    <property type="match status" value="1"/>
</dbReference>
<dbReference type="PANTHER" id="PTHR11469">
    <property type="entry name" value="GLUCOSE-6-PHOSPHATE ISOMERASE"/>
    <property type="match status" value="1"/>
</dbReference>
<dbReference type="PANTHER" id="PTHR11469:SF1">
    <property type="entry name" value="GLUCOSE-6-PHOSPHATE ISOMERASE"/>
    <property type="match status" value="1"/>
</dbReference>
<dbReference type="Pfam" id="PF00342">
    <property type="entry name" value="PGI"/>
    <property type="match status" value="2"/>
</dbReference>
<dbReference type="PRINTS" id="PR00662">
    <property type="entry name" value="G6PISOMERASE"/>
</dbReference>
<dbReference type="SUPFAM" id="SSF53697">
    <property type="entry name" value="SIS domain"/>
    <property type="match status" value="1"/>
</dbReference>
<dbReference type="PROSITE" id="PS00174">
    <property type="entry name" value="P_GLUCOSE_ISOMERASE_2"/>
    <property type="match status" value="1"/>
</dbReference>
<dbReference type="PROSITE" id="PS51463">
    <property type="entry name" value="P_GLUCOSE_ISOMERASE_3"/>
    <property type="match status" value="1"/>
</dbReference>
<keyword id="KW-0963">Cytoplasm</keyword>
<keyword id="KW-0312">Gluconeogenesis</keyword>
<keyword id="KW-0324">Glycolysis</keyword>
<keyword id="KW-0413">Isomerase</keyword>
<comment type="function">
    <text evidence="1">Catalyzes the reversible isomerization of glucose-6-phosphate to fructose-6-phosphate.</text>
</comment>
<comment type="catalytic activity">
    <reaction evidence="1">
        <text>alpha-D-glucose 6-phosphate = beta-D-fructose 6-phosphate</text>
        <dbReference type="Rhea" id="RHEA:11816"/>
        <dbReference type="ChEBI" id="CHEBI:57634"/>
        <dbReference type="ChEBI" id="CHEBI:58225"/>
        <dbReference type="EC" id="5.3.1.9"/>
    </reaction>
</comment>
<comment type="pathway">
    <text evidence="1">Carbohydrate biosynthesis; gluconeogenesis.</text>
</comment>
<comment type="pathway">
    <text evidence="1">Carbohydrate degradation; glycolysis; D-glyceraldehyde 3-phosphate and glycerone phosphate from D-glucose: step 2/4.</text>
</comment>
<comment type="subcellular location">
    <subcellularLocation>
        <location evidence="1">Cytoplasm</location>
    </subcellularLocation>
</comment>
<comment type="similarity">
    <text evidence="1">Belongs to the GPI family.</text>
</comment>
<organism>
    <name type="scientific">Synechococcus sp. (strain ATCC 27144 / PCC 6301 / SAUG 1402/1)</name>
    <name type="common">Anacystis nidulans</name>
    <dbReference type="NCBI Taxonomy" id="269084"/>
    <lineage>
        <taxon>Bacteria</taxon>
        <taxon>Bacillati</taxon>
        <taxon>Cyanobacteriota</taxon>
        <taxon>Cyanophyceae</taxon>
        <taxon>Synechococcales</taxon>
        <taxon>Synechococcaceae</taxon>
        <taxon>Synechococcus</taxon>
    </lineage>
</organism>
<proteinExistence type="inferred from homology"/>
<feature type="chain" id="PRO_0000180753" description="Glucose-6-phosphate isomerase">
    <location>
        <begin position="1"/>
        <end position="528"/>
    </location>
</feature>
<feature type="active site" description="Proton donor" evidence="1">
    <location>
        <position position="322"/>
    </location>
</feature>
<feature type="active site" evidence="1">
    <location>
        <position position="351"/>
    </location>
</feature>
<feature type="active site" evidence="1">
    <location>
        <position position="455"/>
    </location>
</feature>
<name>G6PI_SYNP6</name>
<evidence type="ECO:0000255" key="1">
    <source>
        <dbReference type="HAMAP-Rule" id="MF_00473"/>
    </source>
</evidence>
<sequence>MTAQQLWQRYLDWLYYDPSLEFYLDISRMGFDDAFVTSMQPKFQHAFAAMAELEAGAIANPDEQRMVGHYWLRDPELAPTPELQTQIRDTLAAIQDFALKVHSGVLRPPTGSRFTDILSIGIGGSALGPQFVSEALRPQAALLQIHFFDNTDPAGFDRVLADLGDRLASTLVIVISKSGGTPETRNGMLEVQSAFAQRGIAFAPQAVAVTGVGSHLDHVAITERWLARFPMEDWVGGRTSELSAVGLLSAALLGIDITAMLAGARQMDALTRHSDLRQNPAALLALSWYWAGNGQGKKDMVILPYKDSLLLFSRYLQQLIMESLGKERDLLGKVVHQGIAVYGNKGSTDQHAYVQQLREGIPNFFATFIEVLEDRQGPSPVVEPGITSGDYLSGLLQGTRAALYENGRESITITVPRVDAQQVGALIALYERAVGLYASLVGINAYHQPGVEAGKKAAAGVLEIQRQIVELLQQGQPLSIAAIADDLGQSEQIETIYKILRHLEANQRGVQLTGDRHNPLSLIASWQR</sequence>
<accession>Q5N0B4</accession>
<reference key="1">
    <citation type="journal article" date="2007" name="Photosyn. Res.">
        <title>Complete nucleotide sequence of the freshwater unicellular cyanobacterium Synechococcus elongatus PCC 6301 chromosome: gene content and organization.</title>
        <authorList>
            <person name="Sugita C."/>
            <person name="Ogata K."/>
            <person name="Shikata M."/>
            <person name="Jikuya H."/>
            <person name="Takano J."/>
            <person name="Furumichi M."/>
            <person name="Kanehisa M."/>
            <person name="Omata T."/>
            <person name="Sugiura M."/>
            <person name="Sugita M."/>
        </authorList>
    </citation>
    <scope>NUCLEOTIDE SEQUENCE [LARGE SCALE GENOMIC DNA]</scope>
    <source>
        <strain>ATCC 27144 / PCC 6301 / SAUG 1402/1</strain>
    </source>
</reference>
<gene>
    <name evidence="1" type="primary">pgi</name>
    <name type="ordered locus">syc2066_c</name>
</gene>
<protein>
    <recommendedName>
        <fullName evidence="1">Glucose-6-phosphate isomerase</fullName>
        <shortName evidence="1">GPI</shortName>
        <ecNumber evidence="1">5.3.1.9</ecNumber>
    </recommendedName>
    <alternativeName>
        <fullName evidence="1">Phosphoglucose isomerase</fullName>
        <shortName evidence="1">PGI</shortName>
    </alternativeName>
    <alternativeName>
        <fullName evidence="1">Phosphohexose isomerase</fullName>
        <shortName evidence="1">PHI</shortName>
    </alternativeName>
</protein>